<protein>
    <recommendedName>
        <fullName>Nerve growth factor</fullName>
        <shortName>NGF</shortName>
    </recommendedName>
</protein>
<reference key="1">
    <citation type="journal article" date="1991" name="Mol. Reprod. Dev.">
        <title>Structure and expression of the nerve growth factor gene in Xenopus oocytes and embryos.</title>
        <authorList>
            <person name="Carriero F."/>
            <person name="Campioni M."/>
            <person name="Cardinali B."/>
            <person name="Pierandrei-Amaldi P."/>
        </authorList>
    </citation>
    <scope>NUCLEOTIDE SEQUENCE [GENOMIC DNA]</scope>
</reference>
<reference key="2">
    <citation type="journal article" date="1991" name="Neuron">
        <title>Evolutionary studies of the nerve growth factor family reveal a novel member abundantly expressed in Xenopus ovary.</title>
        <authorList>
            <person name="Hallboeoek F."/>
            <person name="Ibanez C.F."/>
            <person name="Persson H."/>
        </authorList>
    </citation>
    <scope>NUCLEOTIDE SEQUENCE [GENOMIC DNA] OF 170-211</scope>
    <source>
        <tissue>Liver</tissue>
    </source>
</reference>
<evidence type="ECO:0000250" key="1"/>
<evidence type="ECO:0000255" key="2"/>
<evidence type="ECO:0000256" key="3">
    <source>
        <dbReference type="SAM" id="MobiDB-lite"/>
    </source>
</evidence>
<evidence type="ECO:0000305" key="4"/>
<accession>P21617</accession>
<gene>
    <name type="primary">ngf</name>
    <name type="synonym">ngfb</name>
</gene>
<feature type="signal peptide" evidence="2">
    <location>
        <begin position="1"/>
        <end position="18"/>
    </location>
</feature>
<feature type="propeptide" id="PRO_0000019619" evidence="2">
    <location>
        <begin position="19"/>
        <end position="114"/>
    </location>
</feature>
<feature type="chain" id="PRO_0000019620" description="Nerve growth factor">
    <location>
        <begin position="115"/>
        <end position="231"/>
    </location>
</feature>
<feature type="region of interest" description="Disordered" evidence="3">
    <location>
        <begin position="24"/>
        <end position="53"/>
    </location>
</feature>
<feature type="compositionally biased region" description="Basic residues" evidence="3">
    <location>
        <begin position="35"/>
        <end position="50"/>
    </location>
</feature>
<feature type="glycosylation site" description="N-linked (GlcNAc...) asparagine" evidence="2">
    <location>
        <position position="63"/>
    </location>
</feature>
<feature type="glycosylation site" description="N-linked (GlcNAc...) asparagine" evidence="2">
    <location>
        <position position="107"/>
    </location>
</feature>
<feature type="glycosylation site" description="N-linked (GlcNAc...) asparagine" evidence="2">
    <location>
        <position position="158"/>
    </location>
</feature>
<feature type="disulfide bond" evidence="1">
    <location>
        <begin position="128"/>
        <end position="193"/>
    </location>
</feature>
<feature type="disulfide bond" evidence="1">
    <location>
        <begin position="171"/>
        <end position="221"/>
    </location>
</feature>
<feature type="disulfide bond" evidence="1">
    <location>
        <begin position="181"/>
        <end position="223"/>
    </location>
</feature>
<name>NGF_XENLA</name>
<dbReference type="EMBL" id="X55716">
    <property type="protein sequence ID" value="CAA39249.1"/>
    <property type="status" value="ALT_INIT"/>
    <property type="molecule type" value="Genomic_DNA"/>
</dbReference>
<dbReference type="PIR" id="S14481">
    <property type="entry name" value="S14481"/>
</dbReference>
<dbReference type="SMR" id="P21617"/>
<dbReference type="GlyCosmos" id="P21617">
    <property type="glycosylation" value="3 sites, No reported glycans"/>
</dbReference>
<dbReference type="GeneID" id="108709389"/>
<dbReference type="KEGG" id="xla:108709389"/>
<dbReference type="AGR" id="Xenbase:XB-GENE-6500082"/>
<dbReference type="CTD" id="108709389"/>
<dbReference type="Xenbase" id="XB-GENE-6500082">
    <property type="gene designation" value="ngf.S"/>
</dbReference>
<dbReference type="OMA" id="MPMLFYT"/>
<dbReference type="OrthoDB" id="6491780at2759"/>
<dbReference type="Proteomes" id="UP000186698">
    <property type="component" value="Chromosome 2S"/>
</dbReference>
<dbReference type="Bgee" id="108709389">
    <property type="expression patterns" value="Expressed in egg cell and 16 other cell types or tissues"/>
</dbReference>
<dbReference type="GO" id="GO:0030424">
    <property type="term" value="C:axon"/>
    <property type="evidence" value="ECO:0000318"/>
    <property type="project" value="GO_Central"/>
</dbReference>
<dbReference type="GO" id="GO:0030425">
    <property type="term" value="C:dendrite"/>
    <property type="evidence" value="ECO:0000318"/>
    <property type="project" value="GO_Central"/>
</dbReference>
<dbReference type="GO" id="GO:0005615">
    <property type="term" value="C:extracellular space"/>
    <property type="evidence" value="ECO:0000318"/>
    <property type="project" value="GO_Central"/>
</dbReference>
<dbReference type="GO" id="GO:0008021">
    <property type="term" value="C:synaptic vesicle"/>
    <property type="evidence" value="ECO:0000318"/>
    <property type="project" value="GO_Central"/>
</dbReference>
<dbReference type="GO" id="GO:0008083">
    <property type="term" value="F:growth factor activity"/>
    <property type="evidence" value="ECO:0000318"/>
    <property type="project" value="GO_Central"/>
</dbReference>
<dbReference type="GO" id="GO:0005163">
    <property type="term" value="F:nerve growth factor receptor binding"/>
    <property type="evidence" value="ECO:0000318"/>
    <property type="project" value="GO_Central"/>
</dbReference>
<dbReference type="GO" id="GO:0007169">
    <property type="term" value="P:cell surface receptor protein tyrosine kinase signaling pathway"/>
    <property type="evidence" value="ECO:0000318"/>
    <property type="project" value="GO_Central"/>
</dbReference>
<dbReference type="GO" id="GO:0050804">
    <property type="term" value="P:modulation of chemical synaptic transmission"/>
    <property type="evidence" value="ECO:0000318"/>
    <property type="project" value="GO_Central"/>
</dbReference>
<dbReference type="GO" id="GO:0043524">
    <property type="term" value="P:negative regulation of neuron apoptotic process"/>
    <property type="evidence" value="ECO:0000318"/>
    <property type="project" value="GO_Central"/>
</dbReference>
<dbReference type="GO" id="GO:0021675">
    <property type="term" value="P:nerve development"/>
    <property type="evidence" value="ECO:0000318"/>
    <property type="project" value="GO_Central"/>
</dbReference>
<dbReference type="GO" id="GO:0038180">
    <property type="term" value="P:nerve growth factor signaling pathway"/>
    <property type="evidence" value="ECO:0000318"/>
    <property type="project" value="GO_Central"/>
</dbReference>
<dbReference type="GO" id="GO:0048812">
    <property type="term" value="P:neuron projection morphogenesis"/>
    <property type="evidence" value="ECO:0000318"/>
    <property type="project" value="GO_Central"/>
</dbReference>
<dbReference type="FunFam" id="2.10.90.10:FF:000002">
    <property type="entry name" value="Brain-derived neurotrophic factor"/>
    <property type="match status" value="1"/>
</dbReference>
<dbReference type="Gene3D" id="2.10.90.10">
    <property type="entry name" value="Cystine-knot cytokines"/>
    <property type="match status" value="1"/>
</dbReference>
<dbReference type="InterPro" id="IPR029034">
    <property type="entry name" value="Cystine-knot_cytokine"/>
</dbReference>
<dbReference type="InterPro" id="IPR020408">
    <property type="entry name" value="Nerve_growth_factor-like"/>
</dbReference>
<dbReference type="InterPro" id="IPR002072">
    <property type="entry name" value="Nerve_growth_factor-rel"/>
</dbReference>
<dbReference type="InterPro" id="IPR020425">
    <property type="entry name" value="Nerve_growth_factor_bsu"/>
</dbReference>
<dbReference type="InterPro" id="IPR019846">
    <property type="entry name" value="Nerve_growth_factor_CS"/>
</dbReference>
<dbReference type="PANTHER" id="PTHR11589:SF10">
    <property type="entry name" value="BETA-NERVE GROWTH FACTOR"/>
    <property type="match status" value="1"/>
</dbReference>
<dbReference type="PANTHER" id="PTHR11589">
    <property type="entry name" value="NERVE GROWTH FACTOR NGF -RELATED"/>
    <property type="match status" value="1"/>
</dbReference>
<dbReference type="Pfam" id="PF00243">
    <property type="entry name" value="NGF"/>
    <property type="match status" value="1"/>
</dbReference>
<dbReference type="PIRSF" id="PIRSF001789">
    <property type="entry name" value="NGF"/>
    <property type="match status" value="1"/>
</dbReference>
<dbReference type="PRINTS" id="PR00268">
    <property type="entry name" value="NGF"/>
</dbReference>
<dbReference type="PRINTS" id="PR01913">
    <property type="entry name" value="NGFBETA"/>
</dbReference>
<dbReference type="SMART" id="SM00140">
    <property type="entry name" value="NGF"/>
    <property type="match status" value="1"/>
</dbReference>
<dbReference type="SUPFAM" id="SSF57501">
    <property type="entry name" value="Cystine-knot cytokines"/>
    <property type="match status" value="1"/>
</dbReference>
<dbReference type="PROSITE" id="PS00248">
    <property type="entry name" value="NGF_1"/>
    <property type="match status" value="1"/>
</dbReference>
<dbReference type="PROSITE" id="PS50270">
    <property type="entry name" value="NGF_2"/>
    <property type="match status" value="1"/>
</dbReference>
<organism>
    <name type="scientific">Xenopus laevis</name>
    <name type="common">African clawed frog</name>
    <dbReference type="NCBI Taxonomy" id="8355"/>
    <lineage>
        <taxon>Eukaryota</taxon>
        <taxon>Metazoa</taxon>
        <taxon>Chordata</taxon>
        <taxon>Craniata</taxon>
        <taxon>Vertebrata</taxon>
        <taxon>Euteleostomi</taxon>
        <taxon>Amphibia</taxon>
        <taxon>Batrachia</taxon>
        <taxon>Anura</taxon>
        <taxon>Pipoidea</taxon>
        <taxon>Pipidae</taxon>
        <taxon>Xenopodinae</taxon>
        <taxon>Xenopus</taxon>
        <taxon>Xenopus</taxon>
    </lineage>
</organism>
<keyword id="KW-0165">Cleavage on pair of basic residues</keyword>
<keyword id="KW-1015">Disulfide bond</keyword>
<keyword id="KW-0325">Glycoprotein</keyword>
<keyword id="KW-0339">Growth factor</keyword>
<keyword id="KW-1185">Reference proteome</keyword>
<keyword id="KW-0964">Secreted</keyword>
<keyword id="KW-0732">Signal</keyword>
<proteinExistence type="inferred from homology"/>
<comment type="function">
    <text>Nerve growth factor is important for the development and maintenance of the sympathetic and sensory nervous systems. It stimulates division and differentiation of sympathetic and embryonic sensory neurons.</text>
</comment>
<comment type="subunit">
    <text>Homodimer.</text>
</comment>
<comment type="subcellular location">
    <subcellularLocation>
        <location>Secreted</location>
    </subcellularLocation>
</comment>
<comment type="similarity">
    <text evidence="4">Belongs to the NGF-beta family.</text>
</comment>
<comment type="sequence caution" evidence="4">
    <conflict type="erroneous initiation">
        <sequence resource="EMBL-CDS" id="CAA39249"/>
    </conflict>
</comment>
<sequence length="231" mass="26416">MSMLYYTLLIAILISVQAAPKTKDHAPARSSAKSRIPHHTHRTKSLHHSHGKLEAKEPSYFRNVTVDPKLFRKRKFRSPRVLFSTQPPPLSEDFQHLEYLDDEESLNKTIRAKRTVHPVLHKGEYSVCDSVSMWVGEKTKATDIKGKEVTVLGEVNINNSVFKQYFFETKCRDPKPVSSGCRGIDAKHWNSYCTTTHTFVKALTMEGKQAAWRFIRIDTACVCVLSRKGRT</sequence>